<keyword id="KW-0963">Cytoplasm</keyword>
<keyword id="KW-0326">Glycosidase</keyword>
<keyword id="KW-0378">Hydrolase</keyword>
<gene>
    <name evidence="1" type="primary">treF</name>
    <name type="ordered locus">ECED1_4197</name>
</gene>
<sequence length="549" mass="63782">MLNQKIQNPNPDELMIEVDLCYELDPYELKLDEMIEAEPEPEMIEGLPASDALTPADRYLELFEHVQSEKIFPDSKTFPDCAPKMDPLDILIRYRKVRRHRDFDLRKFVENHFWLPEVYSSEYVSDPQNSLKEHIDQLWPVLTREPQDHIPWSSLLALPQSYIVPGGRFSETYYWDSYFTMLGLAESGREDLLKCMADNFAWMIENYGHIPNGNRTYYLSRSQPPVFALMVELFEEDGVRGARRYLDHLKMEYAFWMDGAESLIPNQAYRHVVRMPDGSLLNRYWDDRDTPRDESWLEDVETAKHSGRPPNEVYRDLRAGAASGWDYSSRWLRDTGRLASIRTTQFIPIDLNAFLFKLESAIANISALKGEKETEALFRQKASARRDAVNRYLWDDENGIYRDYDWRREQLALFSAAAIVPLYVGMANHEQADRLANAVRSRLLTPGGILASEYETGEQWDKPNGWAPLQWMAIQGFKMYGDDLLGDEIARNWLKTVNQFYLEQHKLIEKYHIADGVPREGGGGEYPLQDGFGWTNGVVRRLIGLYGEP</sequence>
<feature type="chain" id="PRO_1000149681" description="Cytoplasmic trehalase">
    <location>
        <begin position="1"/>
        <end position="549"/>
    </location>
</feature>
<feature type="active site" description="Proton donor/acceptor" evidence="1">
    <location>
        <position position="326"/>
    </location>
</feature>
<feature type="active site" description="Proton donor/acceptor" evidence="1">
    <location>
        <position position="509"/>
    </location>
</feature>
<feature type="binding site" evidence="1">
    <location>
        <position position="168"/>
    </location>
    <ligand>
        <name>substrate</name>
    </ligand>
</feature>
<feature type="binding site" evidence="1">
    <location>
        <begin position="175"/>
        <end position="176"/>
    </location>
    <ligand>
        <name>substrate</name>
    </ligand>
</feature>
<feature type="binding site" evidence="1">
    <location>
        <position position="212"/>
    </location>
    <ligand>
        <name>substrate</name>
    </ligand>
</feature>
<feature type="binding site" evidence="1">
    <location>
        <begin position="221"/>
        <end position="223"/>
    </location>
    <ligand>
        <name>substrate</name>
    </ligand>
</feature>
<feature type="binding site" evidence="1">
    <location>
        <begin position="292"/>
        <end position="294"/>
    </location>
    <ligand>
        <name>substrate</name>
    </ligand>
</feature>
<feature type="binding site" evidence="1">
    <location>
        <position position="324"/>
    </location>
    <ligand>
        <name>substrate</name>
    </ligand>
</feature>
<feature type="binding site" evidence="1">
    <location>
        <position position="525"/>
    </location>
    <ligand>
        <name>substrate</name>
    </ligand>
</feature>
<accession>B7N1V9</accession>
<dbReference type="EC" id="3.2.1.28" evidence="1"/>
<dbReference type="EMBL" id="CU928162">
    <property type="protein sequence ID" value="CAR10329.2"/>
    <property type="molecule type" value="Genomic_DNA"/>
</dbReference>
<dbReference type="RefSeq" id="WP_000934232.1">
    <property type="nucleotide sequence ID" value="NC_011745.1"/>
</dbReference>
<dbReference type="SMR" id="B7N1V9"/>
<dbReference type="CAZy" id="GH37">
    <property type="family name" value="Glycoside Hydrolase Family 37"/>
</dbReference>
<dbReference type="KEGG" id="ecq:ECED1_4197"/>
<dbReference type="HOGENOM" id="CLU_006451_3_1_6"/>
<dbReference type="UniPathway" id="UPA00300">
    <property type="reaction ID" value="UER00535"/>
</dbReference>
<dbReference type="Proteomes" id="UP000000748">
    <property type="component" value="Chromosome"/>
</dbReference>
<dbReference type="GO" id="GO:0005737">
    <property type="term" value="C:cytoplasm"/>
    <property type="evidence" value="ECO:0007669"/>
    <property type="project" value="UniProtKB-SubCell"/>
</dbReference>
<dbReference type="GO" id="GO:0004555">
    <property type="term" value="F:alpha,alpha-trehalase activity"/>
    <property type="evidence" value="ECO:0007669"/>
    <property type="project" value="UniProtKB-UniRule"/>
</dbReference>
<dbReference type="GO" id="GO:0071474">
    <property type="term" value="P:cellular hyperosmotic response"/>
    <property type="evidence" value="ECO:0007669"/>
    <property type="project" value="InterPro"/>
</dbReference>
<dbReference type="GO" id="GO:0005993">
    <property type="term" value="P:trehalose catabolic process"/>
    <property type="evidence" value="ECO:0007669"/>
    <property type="project" value="UniProtKB-UniRule"/>
</dbReference>
<dbReference type="FunFam" id="1.50.10.10:FF:000003">
    <property type="entry name" value="Cytoplasmic trehalase"/>
    <property type="match status" value="1"/>
</dbReference>
<dbReference type="Gene3D" id="1.50.10.10">
    <property type="match status" value="1"/>
</dbReference>
<dbReference type="HAMAP" id="MF_01059">
    <property type="entry name" value="Cyt_trehalase"/>
    <property type="match status" value="1"/>
</dbReference>
<dbReference type="InterPro" id="IPR008928">
    <property type="entry name" value="6-hairpin_glycosidase_sf"/>
</dbReference>
<dbReference type="InterPro" id="IPR012341">
    <property type="entry name" value="6hp_glycosidase-like_sf"/>
</dbReference>
<dbReference type="InterPro" id="IPR023715">
    <property type="entry name" value="Cyt_trehalase"/>
</dbReference>
<dbReference type="InterPro" id="IPR001661">
    <property type="entry name" value="Glyco_hydro_37"/>
</dbReference>
<dbReference type="InterPro" id="IPR018232">
    <property type="entry name" value="Glyco_hydro_37_CS"/>
</dbReference>
<dbReference type="NCBIfam" id="NF009773">
    <property type="entry name" value="PRK13270.1"/>
    <property type="match status" value="1"/>
</dbReference>
<dbReference type="NCBIfam" id="NF009774">
    <property type="entry name" value="PRK13271.1"/>
    <property type="match status" value="1"/>
</dbReference>
<dbReference type="PANTHER" id="PTHR23403:SF8">
    <property type="entry name" value="CYTOPLASMIC TREHALASE"/>
    <property type="match status" value="1"/>
</dbReference>
<dbReference type="PANTHER" id="PTHR23403">
    <property type="entry name" value="TREHALASE"/>
    <property type="match status" value="1"/>
</dbReference>
<dbReference type="Pfam" id="PF01204">
    <property type="entry name" value="Trehalase"/>
    <property type="match status" value="1"/>
</dbReference>
<dbReference type="PRINTS" id="PR00744">
    <property type="entry name" value="GLHYDRLASE37"/>
</dbReference>
<dbReference type="SUPFAM" id="SSF48208">
    <property type="entry name" value="Six-hairpin glycosidases"/>
    <property type="match status" value="1"/>
</dbReference>
<dbReference type="PROSITE" id="PS00927">
    <property type="entry name" value="TREHALASE_1"/>
    <property type="match status" value="1"/>
</dbReference>
<dbReference type="PROSITE" id="PS00928">
    <property type="entry name" value="TREHALASE_2"/>
    <property type="match status" value="1"/>
</dbReference>
<organism>
    <name type="scientific">Escherichia coli O81 (strain ED1a)</name>
    <dbReference type="NCBI Taxonomy" id="585397"/>
    <lineage>
        <taxon>Bacteria</taxon>
        <taxon>Pseudomonadati</taxon>
        <taxon>Pseudomonadota</taxon>
        <taxon>Gammaproteobacteria</taxon>
        <taxon>Enterobacterales</taxon>
        <taxon>Enterobacteriaceae</taxon>
        <taxon>Escherichia</taxon>
    </lineage>
</organism>
<reference key="1">
    <citation type="journal article" date="2009" name="PLoS Genet.">
        <title>Organised genome dynamics in the Escherichia coli species results in highly diverse adaptive paths.</title>
        <authorList>
            <person name="Touchon M."/>
            <person name="Hoede C."/>
            <person name="Tenaillon O."/>
            <person name="Barbe V."/>
            <person name="Baeriswyl S."/>
            <person name="Bidet P."/>
            <person name="Bingen E."/>
            <person name="Bonacorsi S."/>
            <person name="Bouchier C."/>
            <person name="Bouvet O."/>
            <person name="Calteau A."/>
            <person name="Chiapello H."/>
            <person name="Clermont O."/>
            <person name="Cruveiller S."/>
            <person name="Danchin A."/>
            <person name="Diard M."/>
            <person name="Dossat C."/>
            <person name="Karoui M.E."/>
            <person name="Frapy E."/>
            <person name="Garry L."/>
            <person name="Ghigo J.M."/>
            <person name="Gilles A.M."/>
            <person name="Johnson J."/>
            <person name="Le Bouguenec C."/>
            <person name="Lescat M."/>
            <person name="Mangenot S."/>
            <person name="Martinez-Jehanne V."/>
            <person name="Matic I."/>
            <person name="Nassif X."/>
            <person name="Oztas S."/>
            <person name="Petit M.A."/>
            <person name="Pichon C."/>
            <person name="Rouy Z."/>
            <person name="Ruf C.S."/>
            <person name="Schneider D."/>
            <person name="Tourret J."/>
            <person name="Vacherie B."/>
            <person name="Vallenet D."/>
            <person name="Medigue C."/>
            <person name="Rocha E.P.C."/>
            <person name="Denamur E."/>
        </authorList>
    </citation>
    <scope>NUCLEOTIDE SEQUENCE [LARGE SCALE GENOMIC DNA]</scope>
    <source>
        <strain>ED1a</strain>
    </source>
</reference>
<protein>
    <recommendedName>
        <fullName evidence="1">Cytoplasmic trehalase</fullName>
        <ecNumber evidence="1">3.2.1.28</ecNumber>
    </recommendedName>
    <alternativeName>
        <fullName evidence="1">Alpha,alpha-trehalase</fullName>
    </alternativeName>
    <alternativeName>
        <fullName evidence="1">Alpha,alpha-trehalose glucohydrolase</fullName>
    </alternativeName>
</protein>
<evidence type="ECO:0000255" key="1">
    <source>
        <dbReference type="HAMAP-Rule" id="MF_01059"/>
    </source>
</evidence>
<name>TREF_ECO81</name>
<proteinExistence type="inferred from homology"/>
<comment type="function">
    <text evidence="1">Hydrolyzes trehalose to glucose. Could be involved, in cells returning to low osmolarity conditions, in the utilization of the accumulated cytoplasmic trehalose, which was synthesized in response to high osmolarity.</text>
</comment>
<comment type="catalytic activity">
    <reaction evidence="1">
        <text>alpha,alpha-trehalose + H2O = alpha-D-glucose + beta-D-glucose</text>
        <dbReference type="Rhea" id="RHEA:32675"/>
        <dbReference type="ChEBI" id="CHEBI:15377"/>
        <dbReference type="ChEBI" id="CHEBI:15903"/>
        <dbReference type="ChEBI" id="CHEBI:16551"/>
        <dbReference type="ChEBI" id="CHEBI:17925"/>
        <dbReference type="EC" id="3.2.1.28"/>
    </reaction>
</comment>
<comment type="pathway">
    <text evidence="1">Glycan degradation; trehalose degradation; D-glucose from alpha,alpha-trehalose: step 1/1.</text>
</comment>
<comment type="subunit">
    <text evidence="1">Monomer.</text>
</comment>
<comment type="subcellular location">
    <subcellularLocation>
        <location evidence="1">Cytoplasm</location>
    </subcellularLocation>
</comment>
<comment type="similarity">
    <text evidence="1">Belongs to the glycosyl hydrolase 37 family.</text>
</comment>